<keyword id="KW-1015">Disulfide bond</keyword>
<keyword id="KW-0964">Secreted</keyword>
<keyword id="KW-0732">Signal</keyword>
<keyword id="KW-0800">Toxin</keyword>
<organism>
    <name type="scientific">Chilobrachys guangxiensis</name>
    <name type="common">Chinese earth tiger tarantula</name>
    <name type="synonym">Chilobrachys jingzhao</name>
    <dbReference type="NCBI Taxonomy" id="278060"/>
    <lineage>
        <taxon>Eukaryota</taxon>
        <taxon>Metazoa</taxon>
        <taxon>Ecdysozoa</taxon>
        <taxon>Arthropoda</taxon>
        <taxon>Chelicerata</taxon>
        <taxon>Arachnida</taxon>
        <taxon>Araneae</taxon>
        <taxon>Mygalomorphae</taxon>
        <taxon>Theraphosidae</taxon>
        <taxon>Chilobrachys</taxon>
    </lineage>
</organism>
<name>JZT69_CHIGU</name>
<dbReference type="EMBL" id="EU233920">
    <property type="protein sequence ID" value="ABY71739.1"/>
    <property type="molecule type" value="mRNA"/>
</dbReference>
<dbReference type="SMR" id="B1P1I9"/>
<dbReference type="TCDB" id="8.B.10.1.3">
    <property type="family name" value="the psalmotoxin-1 (pctx1) family"/>
</dbReference>
<dbReference type="ArachnoServer" id="AS000868">
    <property type="toxin name" value="U33-theraphotoxin-Cg1a"/>
</dbReference>
<dbReference type="GO" id="GO:0005576">
    <property type="term" value="C:extracellular region"/>
    <property type="evidence" value="ECO:0007669"/>
    <property type="project" value="UniProtKB-SubCell"/>
</dbReference>
<dbReference type="GO" id="GO:0090729">
    <property type="term" value="F:toxin activity"/>
    <property type="evidence" value="ECO:0007669"/>
    <property type="project" value="UniProtKB-KW"/>
</dbReference>
<dbReference type="Gene3D" id="2.10.80.10">
    <property type="entry name" value="Lipase, subunit A"/>
    <property type="match status" value="1"/>
</dbReference>
<feature type="signal peptide" evidence="2">
    <location>
        <begin position="1"/>
        <end position="17"/>
    </location>
</feature>
<feature type="chain" id="PRO_0000398552" description="U33-theraphotoxin-Cg1a" evidence="6">
    <location>
        <begin position="18"/>
        <end position="124"/>
    </location>
</feature>
<feature type="region of interest" description="Disordered" evidence="3">
    <location>
        <begin position="93"/>
        <end position="124"/>
    </location>
</feature>
<feature type="compositionally biased region" description="Basic and acidic residues" evidence="3">
    <location>
        <begin position="93"/>
        <end position="108"/>
    </location>
</feature>
<feature type="compositionally biased region" description="Acidic residues" evidence="3">
    <location>
        <begin position="109"/>
        <end position="118"/>
    </location>
</feature>
<feature type="disulfide bond" evidence="1">
    <location>
        <begin position="26"/>
        <end position="37"/>
    </location>
</feature>
<feature type="disulfide bond" evidence="1">
    <location>
        <begin position="31"/>
        <end position="51"/>
    </location>
</feature>
<feature type="disulfide bond" evidence="1">
    <location>
        <begin position="36"/>
        <end position="75"/>
    </location>
</feature>
<feature type="disulfide bond" evidence="1">
    <location>
        <begin position="61"/>
        <end position="83"/>
    </location>
</feature>
<feature type="disulfide bond" evidence="1">
    <location>
        <begin position="77"/>
        <end position="94"/>
    </location>
</feature>
<sequence>MKFAVAIAFTLLVCVFAQEEEEPVTCGGKQCKPNSCCVQNSHGKGKDSPRCHPLGKLNNPCEVEPNENGIYSQHCPCGEGLSCTKVGEPNKLRCQEESGKSDKSKESQGSDESEESEESKESCG</sequence>
<protein>
    <recommendedName>
        <fullName evidence="5">U33-theraphotoxin-Cg1a</fullName>
        <shortName evidence="5">U33-TRTX-Cg1a</shortName>
    </recommendedName>
    <alternativeName>
        <fullName evidence="4">Jingzhaotoxin-69</fullName>
        <shortName evidence="4">JZTX-69</shortName>
    </alternativeName>
</protein>
<accession>B1P1I9</accession>
<comment type="subcellular location">
    <subcellularLocation>
        <location evidence="6">Secreted</location>
    </subcellularLocation>
</comment>
<comment type="tissue specificity">
    <text evidence="6">Expressed by the venom gland.</text>
</comment>
<comment type="similarity">
    <text evidence="5">Belongs to the neurotoxin 32 family.</text>
</comment>
<evidence type="ECO:0000250" key="1">
    <source>
        <dbReference type="UniProtKB" id="B1P1J1"/>
    </source>
</evidence>
<evidence type="ECO:0000255" key="2"/>
<evidence type="ECO:0000256" key="3">
    <source>
        <dbReference type="SAM" id="MobiDB-lite"/>
    </source>
</evidence>
<evidence type="ECO:0000303" key="4">
    <source>
    </source>
</evidence>
<evidence type="ECO:0000305" key="5"/>
<evidence type="ECO:0000305" key="6">
    <source>
    </source>
</evidence>
<reference key="1">
    <citation type="journal article" date="2008" name="Cell. Mol. Life Sci.">
        <title>Molecular diversity and evolution of cystine knot toxins of the tarantula Chilobrachys jingzhao.</title>
        <authorList>
            <person name="Chen J."/>
            <person name="Deng M."/>
            <person name="He Q."/>
            <person name="Meng E."/>
            <person name="Jiang L."/>
            <person name="Liao Z."/>
            <person name="Rong M."/>
            <person name="Liang S."/>
        </authorList>
    </citation>
    <scope>NUCLEOTIDE SEQUENCE [LARGE SCALE MRNA]</scope>
    <source>
        <tissue>Venom gland</tissue>
    </source>
</reference>
<proteinExistence type="evidence at transcript level"/>